<gene>
    <name evidence="1" type="primary">fabZ</name>
    <name type="ordered locus">RMA_0007</name>
</gene>
<organism>
    <name type="scientific">Rickettsia massiliae (strain Mtu5)</name>
    <dbReference type="NCBI Taxonomy" id="416276"/>
    <lineage>
        <taxon>Bacteria</taxon>
        <taxon>Pseudomonadati</taxon>
        <taxon>Pseudomonadota</taxon>
        <taxon>Alphaproteobacteria</taxon>
        <taxon>Rickettsiales</taxon>
        <taxon>Rickettsiaceae</taxon>
        <taxon>Rickettsieae</taxon>
        <taxon>Rickettsia</taxon>
        <taxon>spotted fever group</taxon>
    </lineage>
</organism>
<keyword id="KW-0963">Cytoplasm</keyword>
<keyword id="KW-0441">Lipid A biosynthesis</keyword>
<keyword id="KW-0444">Lipid biosynthesis</keyword>
<keyword id="KW-0443">Lipid metabolism</keyword>
<keyword id="KW-0456">Lyase</keyword>
<accession>A8F0C4</accession>
<evidence type="ECO:0000255" key="1">
    <source>
        <dbReference type="HAMAP-Rule" id="MF_00406"/>
    </source>
</evidence>
<protein>
    <recommendedName>
        <fullName evidence="1">3-hydroxyacyl-[acyl-carrier-protein] dehydratase FabZ</fullName>
        <ecNumber evidence="1">4.2.1.59</ecNumber>
    </recommendedName>
    <alternativeName>
        <fullName evidence="1">(3R)-hydroxymyristoyl-[acyl-carrier-protein] dehydratase</fullName>
        <shortName evidence="1">(3R)-hydroxymyristoyl-ACP dehydrase</shortName>
    </alternativeName>
    <alternativeName>
        <fullName evidence="1">Beta-hydroxyacyl-ACP dehydratase</fullName>
    </alternativeName>
</protein>
<name>FABZ_RICM5</name>
<proteinExistence type="inferred from homology"/>
<dbReference type="EC" id="4.2.1.59" evidence="1"/>
<dbReference type="EMBL" id="CP000683">
    <property type="protein sequence ID" value="ABV84356.1"/>
    <property type="molecule type" value="Genomic_DNA"/>
</dbReference>
<dbReference type="RefSeq" id="WP_012152337.1">
    <property type="nucleotide sequence ID" value="NC_009900.1"/>
</dbReference>
<dbReference type="SMR" id="A8F0C4"/>
<dbReference type="KEGG" id="rms:RMA_0007"/>
<dbReference type="HOGENOM" id="CLU_078912_1_2_5"/>
<dbReference type="Proteomes" id="UP000001311">
    <property type="component" value="Chromosome"/>
</dbReference>
<dbReference type="GO" id="GO:0005737">
    <property type="term" value="C:cytoplasm"/>
    <property type="evidence" value="ECO:0007669"/>
    <property type="project" value="UniProtKB-SubCell"/>
</dbReference>
<dbReference type="GO" id="GO:0016020">
    <property type="term" value="C:membrane"/>
    <property type="evidence" value="ECO:0007669"/>
    <property type="project" value="GOC"/>
</dbReference>
<dbReference type="GO" id="GO:0019171">
    <property type="term" value="F:(3R)-hydroxyacyl-[acyl-carrier-protein] dehydratase activity"/>
    <property type="evidence" value="ECO:0007669"/>
    <property type="project" value="UniProtKB-EC"/>
</dbReference>
<dbReference type="GO" id="GO:0006633">
    <property type="term" value="P:fatty acid biosynthetic process"/>
    <property type="evidence" value="ECO:0007669"/>
    <property type="project" value="UniProtKB-UniRule"/>
</dbReference>
<dbReference type="GO" id="GO:0009245">
    <property type="term" value="P:lipid A biosynthetic process"/>
    <property type="evidence" value="ECO:0007669"/>
    <property type="project" value="UniProtKB-UniRule"/>
</dbReference>
<dbReference type="CDD" id="cd01288">
    <property type="entry name" value="FabZ"/>
    <property type="match status" value="1"/>
</dbReference>
<dbReference type="FunFam" id="3.10.129.10:FF:000001">
    <property type="entry name" value="3-hydroxyacyl-[acyl-carrier-protein] dehydratase FabZ"/>
    <property type="match status" value="1"/>
</dbReference>
<dbReference type="Gene3D" id="3.10.129.10">
    <property type="entry name" value="Hotdog Thioesterase"/>
    <property type="match status" value="1"/>
</dbReference>
<dbReference type="HAMAP" id="MF_00406">
    <property type="entry name" value="FabZ"/>
    <property type="match status" value="1"/>
</dbReference>
<dbReference type="InterPro" id="IPR013114">
    <property type="entry name" value="FabA_FabZ"/>
</dbReference>
<dbReference type="InterPro" id="IPR010084">
    <property type="entry name" value="FabZ"/>
</dbReference>
<dbReference type="InterPro" id="IPR029069">
    <property type="entry name" value="HotDog_dom_sf"/>
</dbReference>
<dbReference type="NCBIfam" id="TIGR01750">
    <property type="entry name" value="fabZ"/>
    <property type="match status" value="1"/>
</dbReference>
<dbReference type="NCBIfam" id="NF000582">
    <property type="entry name" value="PRK00006.1"/>
    <property type="match status" value="1"/>
</dbReference>
<dbReference type="PANTHER" id="PTHR30272">
    <property type="entry name" value="3-HYDROXYACYL-[ACYL-CARRIER-PROTEIN] DEHYDRATASE"/>
    <property type="match status" value="1"/>
</dbReference>
<dbReference type="PANTHER" id="PTHR30272:SF1">
    <property type="entry name" value="3-HYDROXYACYL-[ACYL-CARRIER-PROTEIN] DEHYDRATASE"/>
    <property type="match status" value="1"/>
</dbReference>
<dbReference type="Pfam" id="PF07977">
    <property type="entry name" value="FabA"/>
    <property type="match status" value="1"/>
</dbReference>
<dbReference type="SUPFAM" id="SSF54637">
    <property type="entry name" value="Thioesterase/thiol ester dehydrase-isomerase"/>
    <property type="match status" value="1"/>
</dbReference>
<comment type="function">
    <text evidence="1">Involved in unsaturated fatty acids biosynthesis. Catalyzes the dehydration of short chain beta-hydroxyacyl-ACPs and long chain saturated and unsaturated beta-hydroxyacyl-ACPs.</text>
</comment>
<comment type="catalytic activity">
    <reaction evidence="1">
        <text>a (3R)-hydroxyacyl-[ACP] = a (2E)-enoyl-[ACP] + H2O</text>
        <dbReference type="Rhea" id="RHEA:13097"/>
        <dbReference type="Rhea" id="RHEA-COMP:9925"/>
        <dbReference type="Rhea" id="RHEA-COMP:9945"/>
        <dbReference type="ChEBI" id="CHEBI:15377"/>
        <dbReference type="ChEBI" id="CHEBI:78784"/>
        <dbReference type="ChEBI" id="CHEBI:78827"/>
        <dbReference type="EC" id="4.2.1.59"/>
    </reaction>
</comment>
<comment type="subcellular location">
    <subcellularLocation>
        <location evidence="1">Cytoplasm</location>
    </subcellularLocation>
</comment>
<comment type="similarity">
    <text evidence="1">Belongs to the thioester dehydratase family. FabZ subfamily.</text>
</comment>
<sequence length="145" mass="16258">MIIDITEIMDWIPHRYPFLLVDRVLKIDPNKSITGIKNVTVNEPQFTGHFPARPVMPGVLMVEAMAQLAAILVAKSLGSTKNKEVFLMAIENAKFRRIVQPGDTMHIHVVIDQQRANVWKFSSTVTVEGEIAAESKFTAMIKDKA</sequence>
<reference key="1">
    <citation type="journal article" date="2007" name="Genome Res.">
        <title>Lateral gene transfer between obligate intracellular bacteria: evidence from the Rickettsia massiliae genome.</title>
        <authorList>
            <person name="Blanc G."/>
            <person name="Ogata H."/>
            <person name="Robert C."/>
            <person name="Audic S."/>
            <person name="Claverie J.-M."/>
            <person name="Raoult D."/>
        </authorList>
    </citation>
    <scope>NUCLEOTIDE SEQUENCE [LARGE SCALE GENOMIC DNA]</scope>
    <source>
        <strain>Mtu5</strain>
    </source>
</reference>
<feature type="chain" id="PRO_1000060833" description="3-hydroxyacyl-[acyl-carrier-protein] dehydratase FabZ">
    <location>
        <begin position="1"/>
        <end position="145"/>
    </location>
</feature>
<feature type="active site" evidence="1">
    <location>
        <position position="49"/>
    </location>
</feature>